<comment type="function">
    <text evidence="1">Functions in the biosynthesis of branched-chain amino acids. Catalyzes the dehydration of (2R,3R)-2,3-dihydroxy-3-methylpentanoate (2,3-dihydroxy-3-methylvalerate) into 2-oxo-3-methylpentanoate (2-oxo-3-methylvalerate) and of (2R)-2,3-dihydroxy-3-methylbutanoate (2,3-dihydroxyisovalerate) into 2-oxo-3-methylbutanoate (2-oxoisovalerate), the penultimate precursor to L-isoleucine and L-valine, respectively.</text>
</comment>
<comment type="catalytic activity">
    <reaction evidence="1">
        <text>(2R)-2,3-dihydroxy-3-methylbutanoate = 3-methyl-2-oxobutanoate + H2O</text>
        <dbReference type="Rhea" id="RHEA:24809"/>
        <dbReference type="ChEBI" id="CHEBI:11851"/>
        <dbReference type="ChEBI" id="CHEBI:15377"/>
        <dbReference type="ChEBI" id="CHEBI:49072"/>
        <dbReference type="EC" id="4.2.1.9"/>
    </reaction>
    <physiologicalReaction direction="left-to-right" evidence="1">
        <dbReference type="Rhea" id="RHEA:24810"/>
    </physiologicalReaction>
</comment>
<comment type="catalytic activity">
    <reaction evidence="1">
        <text>(2R,3R)-2,3-dihydroxy-3-methylpentanoate = (S)-3-methyl-2-oxopentanoate + H2O</text>
        <dbReference type="Rhea" id="RHEA:27694"/>
        <dbReference type="ChEBI" id="CHEBI:15377"/>
        <dbReference type="ChEBI" id="CHEBI:35146"/>
        <dbReference type="ChEBI" id="CHEBI:49258"/>
        <dbReference type="EC" id="4.2.1.9"/>
    </reaction>
    <physiologicalReaction direction="left-to-right" evidence="1">
        <dbReference type="Rhea" id="RHEA:27695"/>
    </physiologicalReaction>
</comment>
<comment type="cofactor">
    <cofactor evidence="1">
        <name>[2Fe-2S] cluster</name>
        <dbReference type="ChEBI" id="CHEBI:190135"/>
    </cofactor>
    <text evidence="1">Binds 1 [2Fe-2S] cluster per subunit. This cluster acts as a Lewis acid cofactor.</text>
</comment>
<comment type="cofactor">
    <cofactor evidence="1">
        <name>Mg(2+)</name>
        <dbReference type="ChEBI" id="CHEBI:18420"/>
    </cofactor>
</comment>
<comment type="pathway">
    <text evidence="1">Amino-acid biosynthesis; L-isoleucine biosynthesis; L-isoleucine from 2-oxobutanoate: step 3/4.</text>
</comment>
<comment type="pathway">
    <text evidence="1">Amino-acid biosynthesis; L-valine biosynthesis; L-valine from pyruvate: step 3/4.</text>
</comment>
<comment type="subunit">
    <text evidence="1">Homodimer.</text>
</comment>
<comment type="similarity">
    <text evidence="1">Belongs to the IlvD/Edd family.</text>
</comment>
<organism>
    <name type="scientific">Streptococcus sanguinis (strain SK36)</name>
    <dbReference type="NCBI Taxonomy" id="388919"/>
    <lineage>
        <taxon>Bacteria</taxon>
        <taxon>Bacillati</taxon>
        <taxon>Bacillota</taxon>
        <taxon>Bacilli</taxon>
        <taxon>Lactobacillales</taxon>
        <taxon>Streptococcaceae</taxon>
        <taxon>Streptococcus</taxon>
    </lineage>
</organism>
<evidence type="ECO:0000255" key="1">
    <source>
        <dbReference type="HAMAP-Rule" id="MF_00012"/>
    </source>
</evidence>
<keyword id="KW-0001">2Fe-2S</keyword>
<keyword id="KW-0028">Amino-acid biosynthesis</keyword>
<keyword id="KW-0100">Branched-chain amino acid biosynthesis</keyword>
<keyword id="KW-0408">Iron</keyword>
<keyword id="KW-0411">Iron-sulfur</keyword>
<keyword id="KW-0456">Lyase</keyword>
<keyword id="KW-0460">Magnesium</keyword>
<keyword id="KW-0479">Metal-binding</keyword>
<keyword id="KW-1185">Reference proteome</keyword>
<proteinExistence type="inferred from homology"/>
<sequence>MKGKAMTDKDIRHRSKIYDSMVKSPNRAMLRATGMTDKDFETPIVGVISTWAENTPCNIHLHDLGKLAKEGIKAEGAWPVQYGTITVADGIAMGTPGMRFSLTSRDIIADSIEAAMGGHNVDAFVAIGGCDKNMPGSMIAIANMDIPAVFAYGGTIAPGKLDGKDIDLVSVFEGIGKWNHGDLTAEEVRRIECNACPGPGGCGGMYTANTMATAIEVLGMSLPGSSSHPAESKDKQEDIEAAGRAVVKMLKMGLKPSDILTREAFEDAITVTMALGGSTNATLHLLAMAHAANVELTLDDFNVIQEKVPHLADLKPSGQYVFQDLYEVGGVPAVMKYLLANGFLHGDRITCTGKTVAENLVEFADLTPGQKVIMPLENPKRADGPLIILHGNLAPDGAVAKVSGVKVRRHVGPAKVFDSEEAAIDAVLADEVVDGDVVVVRYVGPKGGPGMPEMLSLSSIIVGKGQGDKVALLTDGRFSGGTYGLVVGHIAPEAQDGGPIAYLRTGDMVTVDQDTKEISMAVSDEELAKRKAETTIPPLYSRGVLGKYAHMVSSAAKGAVTDFWKPEETGKK</sequence>
<reference key="1">
    <citation type="journal article" date="2007" name="J. Bacteriol.">
        <title>Genome of the opportunistic pathogen Streptococcus sanguinis.</title>
        <authorList>
            <person name="Xu P."/>
            <person name="Alves J.M."/>
            <person name="Kitten T."/>
            <person name="Brown A."/>
            <person name="Chen Z."/>
            <person name="Ozaki L.S."/>
            <person name="Manque P."/>
            <person name="Ge X."/>
            <person name="Serrano M.G."/>
            <person name="Puiu D."/>
            <person name="Hendricks S."/>
            <person name="Wang Y."/>
            <person name="Chaplin M.D."/>
            <person name="Akan D."/>
            <person name="Paik S."/>
            <person name="Peterson D.L."/>
            <person name="Macrina F.L."/>
            <person name="Buck G.A."/>
        </authorList>
    </citation>
    <scope>NUCLEOTIDE SEQUENCE [LARGE SCALE GENOMIC DNA]</scope>
    <source>
        <strain>SK36</strain>
    </source>
</reference>
<accession>A3CR42</accession>
<feature type="chain" id="PRO_1000001071" description="Dihydroxy-acid dehydratase">
    <location>
        <begin position="1"/>
        <end position="572"/>
    </location>
</feature>
<feature type="active site" description="Proton acceptor" evidence="1">
    <location>
        <position position="479"/>
    </location>
</feature>
<feature type="binding site" evidence="1">
    <location>
        <position position="57"/>
    </location>
    <ligand>
        <name>[2Fe-2S] cluster</name>
        <dbReference type="ChEBI" id="CHEBI:190135"/>
    </ligand>
</feature>
<feature type="binding site" evidence="1">
    <location>
        <position position="89"/>
    </location>
    <ligand>
        <name>Mg(2+)</name>
        <dbReference type="ChEBI" id="CHEBI:18420"/>
    </ligand>
</feature>
<feature type="binding site" evidence="1">
    <location>
        <position position="130"/>
    </location>
    <ligand>
        <name>[2Fe-2S] cluster</name>
        <dbReference type="ChEBI" id="CHEBI:190135"/>
    </ligand>
</feature>
<feature type="binding site" evidence="1">
    <location>
        <position position="131"/>
    </location>
    <ligand>
        <name>Mg(2+)</name>
        <dbReference type="ChEBI" id="CHEBI:18420"/>
    </ligand>
</feature>
<feature type="binding site" description="via carbamate group" evidence="1">
    <location>
        <position position="132"/>
    </location>
    <ligand>
        <name>Mg(2+)</name>
        <dbReference type="ChEBI" id="CHEBI:18420"/>
    </ligand>
</feature>
<feature type="binding site" evidence="1">
    <location>
        <position position="202"/>
    </location>
    <ligand>
        <name>[2Fe-2S] cluster</name>
        <dbReference type="ChEBI" id="CHEBI:190135"/>
    </ligand>
</feature>
<feature type="binding site" evidence="1">
    <location>
        <position position="453"/>
    </location>
    <ligand>
        <name>Mg(2+)</name>
        <dbReference type="ChEBI" id="CHEBI:18420"/>
    </ligand>
</feature>
<feature type="modified residue" description="N6-carboxylysine" evidence="1">
    <location>
        <position position="132"/>
    </location>
</feature>
<gene>
    <name evidence="1" type="primary">ilvD</name>
    <name type="ordered locus">SSA_2286</name>
</gene>
<name>ILVD_STRSV</name>
<protein>
    <recommendedName>
        <fullName evidence="1">Dihydroxy-acid dehydratase</fullName>
        <shortName evidence="1">DAD</shortName>
        <ecNumber evidence="1">4.2.1.9</ecNumber>
    </recommendedName>
</protein>
<dbReference type="EC" id="4.2.1.9" evidence="1"/>
<dbReference type="EMBL" id="CP000387">
    <property type="protein sequence ID" value="ABN45647.1"/>
    <property type="molecule type" value="Genomic_DNA"/>
</dbReference>
<dbReference type="RefSeq" id="YP_001036197.1">
    <property type="nucleotide sequence ID" value="NC_009009.1"/>
</dbReference>
<dbReference type="SMR" id="A3CR42"/>
<dbReference type="STRING" id="388919.SSA_2286"/>
<dbReference type="KEGG" id="ssa:SSA_2286"/>
<dbReference type="PATRIC" id="fig|388919.9.peg.2168"/>
<dbReference type="eggNOG" id="COG0129">
    <property type="taxonomic scope" value="Bacteria"/>
</dbReference>
<dbReference type="HOGENOM" id="CLU_014271_4_2_9"/>
<dbReference type="OrthoDB" id="9807077at2"/>
<dbReference type="UniPathway" id="UPA00047">
    <property type="reaction ID" value="UER00057"/>
</dbReference>
<dbReference type="UniPathway" id="UPA00049">
    <property type="reaction ID" value="UER00061"/>
</dbReference>
<dbReference type="Proteomes" id="UP000002148">
    <property type="component" value="Chromosome"/>
</dbReference>
<dbReference type="GO" id="GO:0051537">
    <property type="term" value="F:2 iron, 2 sulfur cluster binding"/>
    <property type="evidence" value="ECO:0007669"/>
    <property type="project" value="UniProtKB-UniRule"/>
</dbReference>
<dbReference type="GO" id="GO:0004160">
    <property type="term" value="F:dihydroxy-acid dehydratase activity"/>
    <property type="evidence" value="ECO:0007669"/>
    <property type="project" value="UniProtKB-UniRule"/>
</dbReference>
<dbReference type="GO" id="GO:0000287">
    <property type="term" value="F:magnesium ion binding"/>
    <property type="evidence" value="ECO:0007669"/>
    <property type="project" value="UniProtKB-UniRule"/>
</dbReference>
<dbReference type="GO" id="GO:0009097">
    <property type="term" value="P:isoleucine biosynthetic process"/>
    <property type="evidence" value="ECO:0007669"/>
    <property type="project" value="UniProtKB-UniRule"/>
</dbReference>
<dbReference type="GO" id="GO:0009099">
    <property type="term" value="P:L-valine biosynthetic process"/>
    <property type="evidence" value="ECO:0007669"/>
    <property type="project" value="UniProtKB-UniRule"/>
</dbReference>
<dbReference type="FunFam" id="3.50.30.80:FF:000001">
    <property type="entry name" value="Dihydroxy-acid dehydratase"/>
    <property type="match status" value="1"/>
</dbReference>
<dbReference type="Gene3D" id="3.50.30.80">
    <property type="entry name" value="IlvD/EDD C-terminal domain-like"/>
    <property type="match status" value="1"/>
</dbReference>
<dbReference type="HAMAP" id="MF_00012">
    <property type="entry name" value="IlvD"/>
    <property type="match status" value="1"/>
</dbReference>
<dbReference type="InterPro" id="IPR050165">
    <property type="entry name" value="DHAD_IlvD/Edd"/>
</dbReference>
<dbReference type="InterPro" id="IPR042096">
    <property type="entry name" value="Dihydro-acid_dehy_C"/>
</dbReference>
<dbReference type="InterPro" id="IPR004404">
    <property type="entry name" value="DihydroxyA_deHydtase"/>
</dbReference>
<dbReference type="InterPro" id="IPR020558">
    <property type="entry name" value="DiOHA_6PGluconate_deHydtase_CS"/>
</dbReference>
<dbReference type="InterPro" id="IPR056740">
    <property type="entry name" value="ILV_EDD_C"/>
</dbReference>
<dbReference type="InterPro" id="IPR000581">
    <property type="entry name" value="ILV_EDD_N"/>
</dbReference>
<dbReference type="InterPro" id="IPR037237">
    <property type="entry name" value="IlvD/EDD_N"/>
</dbReference>
<dbReference type="NCBIfam" id="TIGR00110">
    <property type="entry name" value="ilvD"/>
    <property type="match status" value="1"/>
</dbReference>
<dbReference type="NCBIfam" id="NF002068">
    <property type="entry name" value="PRK00911.1"/>
    <property type="match status" value="1"/>
</dbReference>
<dbReference type="PANTHER" id="PTHR21000">
    <property type="entry name" value="DIHYDROXY-ACID DEHYDRATASE DAD"/>
    <property type="match status" value="1"/>
</dbReference>
<dbReference type="PANTHER" id="PTHR21000:SF5">
    <property type="entry name" value="DIHYDROXY-ACID DEHYDRATASE, MITOCHONDRIAL"/>
    <property type="match status" value="1"/>
</dbReference>
<dbReference type="Pfam" id="PF24877">
    <property type="entry name" value="ILV_EDD_C"/>
    <property type="match status" value="1"/>
</dbReference>
<dbReference type="Pfam" id="PF00920">
    <property type="entry name" value="ILVD_EDD_N"/>
    <property type="match status" value="1"/>
</dbReference>
<dbReference type="SUPFAM" id="SSF143975">
    <property type="entry name" value="IlvD/EDD N-terminal domain-like"/>
    <property type="match status" value="1"/>
</dbReference>
<dbReference type="SUPFAM" id="SSF52016">
    <property type="entry name" value="LeuD/IlvD-like"/>
    <property type="match status" value="1"/>
</dbReference>
<dbReference type="PROSITE" id="PS00886">
    <property type="entry name" value="ILVD_EDD_1"/>
    <property type="match status" value="1"/>
</dbReference>
<dbReference type="PROSITE" id="PS00887">
    <property type="entry name" value="ILVD_EDD_2"/>
    <property type="match status" value="1"/>
</dbReference>